<dbReference type="EMBL" id="AE014292">
    <property type="protein sequence ID" value="AAN33534.1"/>
    <property type="molecule type" value="Genomic_DNA"/>
</dbReference>
<dbReference type="EMBL" id="CP002998">
    <property type="protein sequence ID" value="AEM19813.1"/>
    <property type="molecule type" value="Genomic_DNA"/>
</dbReference>
<dbReference type="RefSeq" id="WP_006191785.1">
    <property type="nucleotide sequence ID" value="NZ_KN046805.1"/>
</dbReference>
<dbReference type="SMR" id="Q8FWV9"/>
<dbReference type="GeneID" id="45053393"/>
<dbReference type="KEGG" id="bms:BRA0334"/>
<dbReference type="KEGG" id="bsi:BS1330_II0331"/>
<dbReference type="PATRIC" id="fig|204722.22.peg.3114"/>
<dbReference type="HOGENOM" id="CLU_002755_1_1_5"/>
<dbReference type="PhylomeDB" id="Q8FWV9"/>
<dbReference type="Proteomes" id="UP000007104">
    <property type="component" value="Chromosome II"/>
</dbReference>
<dbReference type="GO" id="GO:0005886">
    <property type="term" value="C:plasma membrane"/>
    <property type="evidence" value="ECO:0007669"/>
    <property type="project" value="UniProtKB-SubCell"/>
</dbReference>
<dbReference type="GO" id="GO:0015562">
    <property type="term" value="F:efflux transmembrane transporter activity"/>
    <property type="evidence" value="ECO:0007669"/>
    <property type="project" value="InterPro"/>
</dbReference>
<dbReference type="GO" id="GO:0042910">
    <property type="term" value="F:xenobiotic transmembrane transporter activity"/>
    <property type="evidence" value="ECO:0007669"/>
    <property type="project" value="TreeGrafter"/>
</dbReference>
<dbReference type="FunFam" id="1.20.1640.10:FF:000001">
    <property type="entry name" value="Efflux pump membrane transporter"/>
    <property type="match status" value="1"/>
</dbReference>
<dbReference type="FunFam" id="3.30.70.1430:FF:000001">
    <property type="entry name" value="Efflux pump membrane transporter"/>
    <property type="match status" value="1"/>
</dbReference>
<dbReference type="Gene3D" id="3.30.70.1430">
    <property type="entry name" value="Multidrug efflux transporter AcrB pore domain"/>
    <property type="match status" value="2"/>
</dbReference>
<dbReference type="Gene3D" id="3.30.70.1440">
    <property type="entry name" value="Multidrug efflux transporter AcrB pore domain"/>
    <property type="match status" value="1"/>
</dbReference>
<dbReference type="Gene3D" id="3.30.70.1320">
    <property type="entry name" value="Multidrug efflux transporter AcrB pore domain like"/>
    <property type="match status" value="1"/>
</dbReference>
<dbReference type="Gene3D" id="3.30.2090.10">
    <property type="entry name" value="Multidrug efflux transporter AcrB TolC docking domain, DN and DC subdomains"/>
    <property type="match status" value="2"/>
</dbReference>
<dbReference type="Gene3D" id="1.20.1640.10">
    <property type="entry name" value="Multidrug efflux transporter AcrB transmembrane domain"/>
    <property type="match status" value="2"/>
</dbReference>
<dbReference type="InterPro" id="IPR027463">
    <property type="entry name" value="AcrB_DN_DC_subdom"/>
</dbReference>
<dbReference type="InterPro" id="IPR001036">
    <property type="entry name" value="Acrflvin-R"/>
</dbReference>
<dbReference type="InterPro" id="IPR004764">
    <property type="entry name" value="MdtF-like"/>
</dbReference>
<dbReference type="NCBIfam" id="TIGR00915">
    <property type="entry name" value="2A0602"/>
    <property type="match status" value="1"/>
</dbReference>
<dbReference type="NCBIfam" id="NF000282">
    <property type="entry name" value="RND_permease_1"/>
    <property type="match status" value="1"/>
</dbReference>
<dbReference type="PANTHER" id="PTHR32063">
    <property type="match status" value="1"/>
</dbReference>
<dbReference type="PANTHER" id="PTHR32063:SF76">
    <property type="entry name" value="EFFLUX PUMP MEMBRANE TRANSPORTER"/>
    <property type="match status" value="1"/>
</dbReference>
<dbReference type="Pfam" id="PF00873">
    <property type="entry name" value="ACR_tran"/>
    <property type="match status" value="1"/>
</dbReference>
<dbReference type="PRINTS" id="PR00702">
    <property type="entry name" value="ACRIFLAVINRP"/>
</dbReference>
<dbReference type="SUPFAM" id="SSF82693">
    <property type="entry name" value="Multidrug efflux transporter AcrB pore domain, PN1, PN2, PC1 and PC2 subdomains"/>
    <property type="match status" value="3"/>
</dbReference>
<dbReference type="SUPFAM" id="SSF82714">
    <property type="entry name" value="Multidrug efflux transporter AcrB TolC docking domain, DN and DC subdomains"/>
    <property type="match status" value="2"/>
</dbReference>
<dbReference type="SUPFAM" id="SSF82866">
    <property type="entry name" value="Multidrug efflux transporter AcrB transmembrane domain"/>
    <property type="match status" value="2"/>
</dbReference>
<reference key="1">
    <citation type="journal article" date="2002" name="Proc. Natl. Acad. Sci. U.S.A.">
        <title>The Brucella suis genome reveals fundamental similarities between animal and plant pathogens and symbionts.</title>
        <authorList>
            <person name="Paulsen I.T."/>
            <person name="Seshadri R."/>
            <person name="Nelson K.E."/>
            <person name="Eisen J.A."/>
            <person name="Heidelberg J.F."/>
            <person name="Read T.D."/>
            <person name="Dodson R.J."/>
            <person name="Umayam L.A."/>
            <person name="Brinkac L.M."/>
            <person name="Beanan M.J."/>
            <person name="Daugherty S.C."/>
            <person name="DeBoy R.T."/>
            <person name="Durkin A.S."/>
            <person name="Kolonay J.F."/>
            <person name="Madupu R."/>
            <person name="Nelson W.C."/>
            <person name="Ayodeji B."/>
            <person name="Kraul M."/>
            <person name="Shetty J."/>
            <person name="Malek J.A."/>
            <person name="Van Aken S.E."/>
            <person name="Riedmuller S."/>
            <person name="Tettelin H."/>
            <person name="Gill S.R."/>
            <person name="White O."/>
            <person name="Salzberg S.L."/>
            <person name="Hoover D.L."/>
            <person name="Lindler L.E."/>
            <person name="Halling S.M."/>
            <person name="Boyle S.M."/>
            <person name="Fraser C.M."/>
        </authorList>
    </citation>
    <scope>NUCLEOTIDE SEQUENCE [LARGE SCALE GENOMIC DNA]</scope>
    <source>
        <strain>1330</strain>
    </source>
</reference>
<reference key="2">
    <citation type="journal article" date="2011" name="J. Bacteriol.">
        <title>Revised genome sequence of Brucella suis 1330.</title>
        <authorList>
            <person name="Tae H."/>
            <person name="Shallom S."/>
            <person name="Settlage R."/>
            <person name="Preston D."/>
            <person name="Adams L.G."/>
            <person name="Garner H.R."/>
        </authorList>
    </citation>
    <scope>NUCLEOTIDE SEQUENCE [LARGE SCALE GENOMIC DNA]</scope>
    <source>
        <strain>1330</strain>
    </source>
</reference>
<reference key="3">
    <citation type="journal article" date="2009" name="J. Bacteriol.">
        <title>Interplay between two RND systems mediating antimicrobial resistance in Brucella suis.</title>
        <authorList>
            <person name="Martin F.A."/>
            <person name="Posadas D.M."/>
            <person name="Carrica M.C."/>
            <person name="Cravero S.L."/>
            <person name="O'Callaghan D."/>
            <person name="Zorreguieta A."/>
        </authorList>
    </citation>
    <scope>FUNCTION IN RESISTANCE</scope>
    <scope>SUBUNIT</scope>
    <scope>INDUCTION</scope>
    <scope>DISRUPTION PHENOTYPE</scope>
    <source>
        <strain>1330</strain>
    </source>
</reference>
<keyword id="KW-0997">Cell inner membrane</keyword>
<keyword id="KW-1003">Cell membrane</keyword>
<keyword id="KW-0472">Membrane</keyword>
<keyword id="KW-0812">Transmembrane</keyword>
<keyword id="KW-1133">Transmembrane helix</keyword>
<keyword id="KW-0813">Transport</keyword>
<gene>
    <name type="primary">bepG</name>
    <name type="ordered locus">BRA0334</name>
    <name type="ordered locus">BS1330_II0331</name>
</gene>
<accession>Q8FWV9</accession>
<accession>G0KC75</accession>
<sequence length="1074" mass="114902">MLSSVFINRPRLAIVIAIVITLAGLIAVTRIPVAQFPDIVPPQVSVTATYPGASAETVEAAIAQPIEAQVNGVDDMIYMSSTSGNNGTYTLTVTFKVGSDPNLNTVNVQNRVRLAEANLPQEVTRLGVTVKKQSSSFLQIITLLSPDSRYDELFLNNYGVINVVDRLARVPGVGQAQSFGTFNYSMRIWFNTDALTSLNLTPNDIVNAISSQNVQAAVGRLGAPPMTDQQQIQLTLTTQGRLTDAKQFENIIIRANPDGSSVRLKDVARVELAAQSYDTIGRLNGKPASVIAVYQAPGSNAVAAAEGVRNVMEQLKQSFPAGLDYKITYDTTVFVSSTIHEVIKTLLEAFVLVVVVVFIFLGNFRATLIPTLAVPVSLIGTFAVLLVLGFSANTISLFAMILAIGIVVDDAIVVVENVERVMAETGLPPKEAAKQAMQEITAPIIAITLVLLSVFVPVAFIPGITGALYAQFALTVSVAMLISAINALTLSPALCGVFLKPHQGRKKSLYGRTMDKLSSGIEKISDGYAHIVRRLVRMAFLSIVLVAGLGAGAYFLNTIVPTGFLPEEDQGLFFVQVNLPPAASQSRTAAVVSEIEADITKMAGVADVTSVTGFSFIDGLAVSNAGLMIVTLKPLEERLKDNITVFDVIAEVNRRTAAIPSAVAITMNLPPILGLGSSGGFQYQLEDQEGQSPQQLASVAQGLVMAANQNPKLSRVFTTFATDTPQLNLNIDRQKALSLGVSPNNIIQALQSTLGGYFVNNFNTLGRTWQVIIQGEQQDRKTVEDIYRINVRSSHGDMVPLRSLVSVEERLGPLYITRYNNYRSASIQGNAAPGVSSGEALAAMAQVSKTTLPSGYGYEWTGTALQELQAAGQTSMILALAVLFAYLFLVALYESWTIPVGVLLSVTAGLAGAMLALWITGLSNDIYAQIGIVVLIALASKNGILIVEFAKERREEGVPLEQAAIIGARQRFRPVMMTSFAFILGLVPLVIAVGAAAASRRAVGTSVFGGMIAASAVGIFLIPMLYVVLERVREWGHARILRKPLYEEEKQEKADGDASGPTVPPTQPEDRGLS</sequence>
<organism>
    <name type="scientific">Brucella suis biovar 1 (strain 1330)</name>
    <dbReference type="NCBI Taxonomy" id="204722"/>
    <lineage>
        <taxon>Bacteria</taxon>
        <taxon>Pseudomonadati</taxon>
        <taxon>Pseudomonadota</taxon>
        <taxon>Alphaproteobacteria</taxon>
        <taxon>Hyphomicrobiales</taxon>
        <taxon>Brucellaceae</taxon>
        <taxon>Brucella/Ochrobactrum group</taxon>
        <taxon>Brucella</taxon>
    </lineage>
</organism>
<proteinExistence type="evidence at protein level"/>
<evidence type="ECO:0000255" key="1"/>
<evidence type="ECO:0000256" key="2">
    <source>
        <dbReference type="SAM" id="MobiDB-lite"/>
    </source>
</evidence>
<evidence type="ECO:0000269" key="3">
    <source>
    </source>
</evidence>
<evidence type="ECO:0000305" key="4"/>
<name>BEPG_BRUSU</name>
<protein>
    <recommendedName>
        <fullName>Efflux pump membrane transporter BepG</fullName>
    </recommendedName>
</protein>
<feature type="chain" id="PRO_0000390651" description="Efflux pump membrane transporter BepG">
    <location>
        <begin position="1"/>
        <end position="1074"/>
    </location>
</feature>
<feature type="transmembrane region" description="Helical" evidence="1">
    <location>
        <begin position="13"/>
        <end position="33"/>
    </location>
</feature>
<feature type="transmembrane region" description="Helical" evidence="1">
    <location>
        <begin position="342"/>
        <end position="362"/>
    </location>
</feature>
<feature type="transmembrane region" description="Helical" evidence="1">
    <location>
        <begin position="368"/>
        <end position="388"/>
    </location>
</feature>
<feature type="transmembrane region" description="Helical" evidence="1">
    <location>
        <begin position="395"/>
        <end position="415"/>
    </location>
</feature>
<feature type="transmembrane region" description="Helical" evidence="1">
    <location>
        <begin position="444"/>
        <end position="464"/>
    </location>
</feature>
<feature type="transmembrane region" description="Helical" evidence="1">
    <location>
        <begin position="478"/>
        <end position="498"/>
    </location>
</feature>
<feature type="transmembrane region" description="Helical" evidence="1">
    <location>
        <begin position="540"/>
        <end position="560"/>
    </location>
</feature>
<feature type="transmembrane region" description="Helical" evidence="1">
    <location>
        <begin position="876"/>
        <end position="896"/>
    </location>
</feature>
<feature type="transmembrane region" description="Helical" evidence="1">
    <location>
        <begin position="898"/>
        <end position="918"/>
    </location>
</feature>
<feature type="transmembrane region" description="Helical" evidence="1">
    <location>
        <begin position="930"/>
        <end position="950"/>
    </location>
</feature>
<feature type="transmembrane region" description="Helical" evidence="1">
    <location>
        <begin position="975"/>
        <end position="995"/>
    </location>
</feature>
<feature type="transmembrane region" description="Helical" evidence="1">
    <location>
        <begin position="1007"/>
        <end position="1027"/>
    </location>
</feature>
<feature type="region of interest" description="Disordered" evidence="2">
    <location>
        <begin position="1050"/>
        <end position="1074"/>
    </location>
</feature>
<comment type="function">
    <text evidence="3">May contribute to resistance to some drugs, such as deoxycholate, sodium dodecyl sulfate and nalidixic acid, in the absence of BepD and BepE.</text>
</comment>
<comment type="subunit">
    <text evidence="3">Probably part of a tripartite efflux pump, which is composed of an outer membrane efflux protein, an inner membrane protein and a protein that expands the periplasmic space. Could form a tripartite pump with BepC and BepF.</text>
</comment>
<comment type="subcellular location">
    <subcellularLocation>
        <location evidence="4">Cell inner membrane</location>
        <topology evidence="4">Multi-pass membrane protein</topology>
    </subcellularLocation>
</comment>
<comment type="induction">
    <text evidence="3">Induced in the absence of BepDE.</text>
</comment>
<comment type="disruption phenotype">
    <text evidence="3">Shows no differences in the resistance profile to different dyes, detergents and antimicrobials.</text>
</comment>
<comment type="similarity">
    <text evidence="4">Belongs to the resistance-nodulation-cell division (RND) (TC 2.A.6) family.</text>
</comment>